<keyword id="KW-0002">3D-structure</keyword>
<keyword id="KW-1185">Reference proteome</keyword>
<keyword id="KW-0804">Transcription</keyword>
<keyword id="KW-0805">Transcription regulation</keyword>
<keyword id="KW-0806">Transcription termination</keyword>
<organismHost>
    <name type="scientific">Salmonella typhimurium</name>
    <dbReference type="NCBI Taxonomy" id="90371"/>
</organismHost>
<sequence>MTVITYGKSTFAGNAKTRRHERRRKLAIERDTICNIIDSIFGCDAPDASQEVKAKRIDRVTKAISLAGTRQKEVEGGSVLLPGVALYAAGHRKSKQITAR</sequence>
<comment type="function">
    <text>N protein regulates the transition from the early to the middle stage of lytic development.</text>
</comment>
<organism>
    <name type="scientific">Salmonella phage P22</name>
    <name type="common">Bacteriophage P22</name>
    <dbReference type="NCBI Taxonomy" id="10754"/>
    <lineage>
        <taxon>Viruses</taxon>
        <taxon>Duplodnaviria</taxon>
        <taxon>Heunggongvirae</taxon>
        <taxon>Uroviricota</taxon>
        <taxon>Caudoviricetes</taxon>
        <taxon>Lederbergvirus</taxon>
    </lineage>
</organism>
<name>REGN_BPP22</name>
<proteinExistence type="evidence at protein level"/>
<reference key="1">
    <citation type="journal article" date="1985" name="J. Mol. Biol.">
        <title>Conservation of genome form but not sequence in the transcription antitermination determinants of bacteriophages lambda, phi 21 and P22.</title>
        <authorList>
            <person name="Franklin N.C."/>
        </authorList>
    </citation>
    <scope>NUCLEOTIDE SEQUENCE</scope>
</reference>
<reference key="2">
    <citation type="journal article" date="1993" name="J. Bacteriol.">
        <title>Superinfection exclusion (sieB) genes of bacteriophages P22 and lambda.</title>
        <authorList>
            <person name="Ranade K."/>
            <person name="Poteete A.R."/>
        </authorList>
    </citation>
    <scope>NUCLEOTIDE SEQUENCE OF 69-100</scope>
    <scope>SEQUENCE REVISION</scope>
</reference>
<reference key="3">
    <citation type="journal article" date="2000" name="J. Bacteriol.">
        <title>Sequence of the genome of Salmonella bacteriophage P22.</title>
        <authorList>
            <person name="Vander Byl C.S."/>
            <person name="Kropinski A.M.B."/>
        </authorList>
    </citation>
    <scope>NUCLEOTIDE SEQUENCE [LARGE SCALE GENOMIC DNA]</scope>
</reference>
<reference key="4">
    <citation type="journal article" date="2003" name="J. Bacteriol.">
        <title>Corrected sequence of the bacteriophage P22 genome.</title>
        <authorList>
            <person name="Pedulla M.L."/>
            <person name="Ford M.E."/>
            <person name="Karthikeyan T."/>
            <person name="Houtz J.M."/>
            <person name="Hendrix R.W."/>
            <person name="Hatfull G.F."/>
            <person name="Poteete A.R."/>
            <person name="Gilcrease E.B."/>
            <person name="Winn-Stapley D.A."/>
            <person name="Casjens S.R."/>
        </authorList>
    </citation>
    <scope>NUCLEOTIDE SEQUENCE [LARGE SCALE GENOMIC DNA]</scope>
</reference>
<reference key="5">
    <citation type="journal article" date="1998" name="Nat. Struct. Biol.">
        <title>Solution structure of P22 transcriptional antitermination N peptide-boxB RNA complex.</title>
        <authorList>
            <person name="Cai Z."/>
            <person name="Gorin A."/>
            <person name="Frederick R."/>
            <person name="Ye X."/>
            <person name="Hu W."/>
            <person name="Majumdar A."/>
            <person name="Kettani A."/>
            <person name="Patel D.J."/>
        </authorList>
    </citation>
    <scope>STRUCTURE BY NMR OF 14-32</scope>
</reference>
<gene>
    <name type="primary">N</name>
    <name type="synonym">24</name>
</gene>
<accession>P04891</accession>
<accession>Q7PCC8</accession>
<evidence type="ECO:0007829" key="1">
    <source>
        <dbReference type="PDB" id="1A4T"/>
    </source>
</evidence>
<feature type="chain" id="PRO_0000077581" description="Probable regulatory protein N">
    <location>
        <begin position="1"/>
        <end position="100"/>
    </location>
</feature>
<feature type="helix" evidence="1">
    <location>
        <begin position="17"/>
        <end position="31"/>
    </location>
</feature>
<dbReference type="EMBL" id="X02141">
    <property type="protein sequence ID" value="CAA26079.1"/>
    <property type="status" value="ALT_SEQ"/>
    <property type="molecule type" value="Genomic_DNA"/>
</dbReference>
<dbReference type="EMBL" id="L18800">
    <property type="status" value="NOT_ANNOTATED_CDS"/>
    <property type="molecule type" value="Unassigned_DNA"/>
</dbReference>
<dbReference type="EMBL" id="AF217253">
    <property type="protein sequence ID" value="AAF75023.1"/>
    <property type="molecule type" value="Genomic_DNA"/>
</dbReference>
<dbReference type="EMBL" id="BK000583">
    <property type="protein sequence ID" value="DAA01047.1"/>
    <property type="molecule type" value="Genomic_DNA"/>
</dbReference>
<dbReference type="PIR" id="S10069">
    <property type="entry name" value="S10069"/>
</dbReference>
<dbReference type="RefSeq" id="NP_059605.1">
    <property type="nucleotide sequence ID" value="NC_002371.2"/>
</dbReference>
<dbReference type="PDB" id="1A4T">
    <property type="method" value="NMR"/>
    <property type="chains" value="B=14-32"/>
</dbReference>
<dbReference type="PDBsum" id="1A4T"/>
<dbReference type="SMR" id="P04891"/>
<dbReference type="GeneID" id="1262841"/>
<dbReference type="KEGG" id="vg:1262841"/>
<dbReference type="OrthoDB" id="17555at10239"/>
<dbReference type="EvolutionaryTrace" id="P04891"/>
<dbReference type="Proteomes" id="UP000001795">
    <property type="component" value="Segment"/>
</dbReference>
<dbReference type="Proteomes" id="UP000007960">
    <property type="component" value="Segment"/>
</dbReference>
<dbReference type="GO" id="GO:0006353">
    <property type="term" value="P:DNA-templated transcription termination"/>
    <property type="evidence" value="ECO:0007669"/>
    <property type="project" value="UniProtKB-KW"/>
</dbReference>
<protein>
    <recommendedName>
        <fullName>Probable regulatory protein N</fullName>
    </recommendedName>
</protein>